<sequence length="209" mass="22244">MIGLVGKKVGMTRIFTEDGVSIPVTVIEVEANRVTQVKDLANDGYRAIQVTTGAKKANRVTKPEAGHFAKAGVEAGRGLWEFRLAEGEEFTVGQSISVELFADVKKVDVTGTSKGKGFAGTVKRWNFRTQDATHGNSLSHRVPGSIGQNQTPGKVFKGKKMAGQMGNERVTVQSLDVVRVDAERNLLLVKGAVPGATGSDLIVKPAVKA</sequence>
<keyword id="KW-0488">Methylation</keyword>
<keyword id="KW-0687">Ribonucleoprotein</keyword>
<keyword id="KW-0689">Ribosomal protein</keyword>
<keyword id="KW-0694">RNA-binding</keyword>
<keyword id="KW-0699">rRNA-binding</keyword>
<protein>
    <recommendedName>
        <fullName evidence="1">Large ribosomal subunit protein uL3</fullName>
    </recommendedName>
    <alternativeName>
        <fullName evidence="2">50S ribosomal protein L3</fullName>
    </alternativeName>
</protein>
<reference key="1">
    <citation type="journal article" date="2008" name="J. Bacteriol.">
        <title>Insights into the environmental resistance gene pool from the genome sequence of the multidrug-resistant environmental isolate Escherichia coli SMS-3-5.</title>
        <authorList>
            <person name="Fricke W.F."/>
            <person name="Wright M.S."/>
            <person name="Lindell A.H."/>
            <person name="Harkins D.M."/>
            <person name="Baker-Austin C."/>
            <person name="Ravel J."/>
            <person name="Stepanauskas R."/>
        </authorList>
    </citation>
    <scope>NUCLEOTIDE SEQUENCE [LARGE SCALE GENOMIC DNA]</scope>
    <source>
        <strain>SMS-3-5 / SECEC</strain>
    </source>
</reference>
<organism>
    <name type="scientific">Escherichia coli (strain SMS-3-5 / SECEC)</name>
    <dbReference type="NCBI Taxonomy" id="439855"/>
    <lineage>
        <taxon>Bacteria</taxon>
        <taxon>Pseudomonadati</taxon>
        <taxon>Pseudomonadota</taxon>
        <taxon>Gammaproteobacteria</taxon>
        <taxon>Enterobacterales</taxon>
        <taxon>Enterobacteriaceae</taxon>
        <taxon>Escherichia</taxon>
    </lineage>
</organism>
<comment type="function">
    <text evidence="1">One of the primary rRNA binding proteins, it binds directly near the 3'-end of the 23S rRNA, where it nucleates assembly of the 50S subunit.</text>
</comment>
<comment type="subunit">
    <text evidence="1">Part of the 50S ribosomal subunit. Forms a cluster with proteins L14 and L19.</text>
</comment>
<comment type="PTM">
    <text evidence="1">Methylated by PrmB.</text>
</comment>
<comment type="similarity">
    <text evidence="1">Belongs to the universal ribosomal protein uL3 family.</text>
</comment>
<accession>B1LHD4</accession>
<dbReference type="EMBL" id="CP000970">
    <property type="protein sequence ID" value="ACB16215.1"/>
    <property type="molecule type" value="Genomic_DNA"/>
</dbReference>
<dbReference type="RefSeq" id="WP_000579833.1">
    <property type="nucleotide sequence ID" value="NC_010498.1"/>
</dbReference>
<dbReference type="SMR" id="B1LHD4"/>
<dbReference type="GeneID" id="86948184"/>
<dbReference type="KEGG" id="ecm:EcSMS35_3615"/>
<dbReference type="HOGENOM" id="CLU_044142_4_1_6"/>
<dbReference type="Proteomes" id="UP000007011">
    <property type="component" value="Chromosome"/>
</dbReference>
<dbReference type="GO" id="GO:0022625">
    <property type="term" value="C:cytosolic large ribosomal subunit"/>
    <property type="evidence" value="ECO:0007669"/>
    <property type="project" value="TreeGrafter"/>
</dbReference>
<dbReference type="GO" id="GO:0019843">
    <property type="term" value="F:rRNA binding"/>
    <property type="evidence" value="ECO:0007669"/>
    <property type="project" value="UniProtKB-UniRule"/>
</dbReference>
<dbReference type="GO" id="GO:0003735">
    <property type="term" value="F:structural constituent of ribosome"/>
    <property type="evidence" value="ECO:0007669"/>
    <property type="project" value="InterPro"/>
</dbReference>
<dbReference type="GO" id="GO:0006412">
    <property type="term" value="P:translation"/>
    <property type="evidence" value="ECO:0007669"/>
    <property type="project" value="UniProtKB-UniRule"/>
</dbReference>
<dbReference type="FunFam" id="2.40.30.10:FF:000004">
    <property type="entry name" value="50S ribosomal protein L3"/>
    <property type="match status" value="1"/>
</dbReference>
<dbReference type="FunFam" id="3.30.160.810:FF:000001">
    <property type="entry name" value="50S ribosomal protein L3"/>
    <property type="match status" value="1"/>
</dbReference>
<dbReference type="Gene3D" id="3.30.160.810">
    <property type="match status" value="1"/>
</dbReference>
<dbReference type="Gene3D" id="2.40.30.10">
    <property type="entry name" value="Translation factors"/>
    <property type="match status" value="1"/>
</dbReference>
<dbReference type="HAMAP" id="MF_01325_B">
    <property type="entry name" value="Ribosomal_uL3_B"/>
    <property type="match status" value="1"/>
</dbReference>
<dbReference type="InterPro" id="IPR000597">
    <property type="entry name" value="Ribosomal_uL3"/>
</dbReference>
<dbReference type="InterPro" id="IPR019927">
    <property type="entry name" value="Ribosomal_uL3_bac/org-type"/>
</dbReference>
<dbReference type="InterPro" id="IPR019926">
    <property type="entry name" value="Ribosomal_uL3_CS"/>
</dbReference>
<dbReference type="InterPro" id="IPR009000">
    <property type="entry name" value="Transl_B-barrel_sf"/>
</dbReference>
<dbReference type="NCBIfam" id="TIGR03625">
    <property type="entry name" value="L3_bact"/>
    <property type="match status" value="1"/>
</dbReference>
<dbReference type="PANTHER" id="PTHR11229">
    <property type="entry name" value="50S RIBOSOMAL PROTEIN L3"/>
    <property type="match status" value="1"/>
</dbReference>
<dbReference type="PANTHER" id="PTHR11229:SF16">
    <property type="entry name" value="LARGE RIBOSOMAL SUBUNIT PROTEIN UL3C"/>
    <property type="match status" value="1"/>
</dbReference>
<dbReference type="Pfam" id="PF00297">
    <property type="entry name" value="Ribosomal_L3"/>
    <property type="match status" value="1"/>
</dbReference>
<dbReference type="SUPFAM" id="SSF50447">
    <property type="entry name" value="Translation proteins"/>
    <property type="match status" value="1"/>
</dbReference>
<dbReference type="PROSITE" id="PS00474">
    <property type="entry name" value="RIBOSOMAL_L3"/>
    <property type="match status" value="1"/>
</dbReference>
<name>RL3_ECOSM</name>
<proteinExistence type="inferred from homology"/>
<gene>
    <name evidence="1" type="primary">rplC</name>
    <name type="ordered locus">EcSMS35_3615</name>
</gene>
<feature type="chain" id="PRO_1000141866" description="Large ribosomal subunit protein uL3">
    <location>
        <begin position="1"/>
        <end position="209"/>
    </location>
</feature>
<feature type="modified residue" description="N5-methylglutamine" evidence="1">
    <location>
        <position position="150"/>
    </location>
</feature>
<evidence type="ECO:0000255" key="1">
    <source>
        <dbReference type="HAMAP-Rule" id="MF_01325"/>
    </source>
</evidence>
<evidence type="ECO:0000305" key="2"/>